<reference key="1">
    <citation type="submission" date="2007-04" db="EMBL/GenBank/DDBJ databases">
        <title>Complete sequence of Roseiflexus sp. RS-1.</title>
        <authorList>
            <consortium name="US DOE Joint Genome Institute"/>
            <person name="Copeland A."/>
            <person name="Lucas S."/>
            <person name="Lapidus A."/>
            <person name="Barry K."/>
            <person name="Detter J.C."/>
            <person name="Glavina del Rio T."/>
            <person name="Hammon N."/>
            <person name="Israni S."/>
            <person name="Dalin E."/>
            <person name="Tice H."/>
            <person name="Pitluck S."/>
            <person name="Chertkov O."/>
            <person name="Brettin T."/>
            <person name="Bruce D."/>
            <person name="Han C."/>
            <person name="Schmutz J."/>
            <person name="Larimer F."/>
            <person name="Land M."/>
            <person name="Hauser L."/>
            <person name="Kyrpides N."/>
            <person name="Mikhailova N."/>
            <person name="Bryant D.A."/>
            <person name="Richardson P."/>
        </authorList>
    </citation>
    <scope>NUCLEOTIDE SEQUENCE [LARGE SCALE GENOMIC DNA]</scope>
    <source>
        <strain>RS-1</strain>
    </source>
</reference>
<comment type="function">
    <text evidence="1">This protein is involved in the repair of mismatches in DNA. It is possible that it carries out the mismatch recognition step. This protein has a weak ATPase activity.</text>
</comment>
<comment type="similarity">
    <text evidence="1">Belongs to the DNA mismatch repair MutS family.</text>
</comment>
<accession>A5UZK7</accession>
<evidence type="ECO:0000255" key="1">
    <source>
        <dbReference type="HAMAP-Rule" id="MF_00096"/>
    </source>
</evidence>
<evidence type="ECO:0000256" key="2">
    <source>
        <dbReference type="SAM" id="MobiDB-lite"/>
    </source>
</evidence>
<proteinExistence type="inferred from homology"/>
<keyword id="KW-0067">ATP-binding</keyword>
<keyword id="KW-0227">DNA damage</keyword>
<keyword id="KW-0234">DNA repair</keyword>
<keyword id="KW-0238">DNA-binding</keyword>
<keyword id="KW-0547">Nucleotide-binding</keyword>
<gene>
    <name evidence="1" type="primary">mutS</name>
    <name type="ordered locus">RoseRS_3706</name>
</gene>
<feature type="chain" id="PRO_0000335220" description="DNA mismatch repair protein MutS">
    <location>
        <begin position="1"/>
        <end position="1085"/>
    </location>
</feature>
<feature type="region of interest" description="Disordered" evidence="2">
    <location>
        <begin position="533"/>
        <end position="564"/>
    </location>
</feature>
<feature type="region of interest" description="Disordered" evidence="2">
    <location>
        <begin position="997"/>
        <end position="1042"/>
    </location>
</feature>
<feature type="compositionally biased region" description="Polar residues" evidence="2">
    <location>
        <begin position="548"/>
        <end position="559"/>
    </location>
</feature>
<feature type="compositionally biased region" description="Low complexity" evidence="2">
    <location>
        <begin position="1019"/>
        <end position="1031"/>
    </location>
</feature>
<feature type="binding site" evidence="1">
    <location>
        <begin position="812"/>
        <end position="819"/>
    </location>
    <ligand>
        <name>ATP</name>
        <dbReference type="ChEBI" id="CHEBI:30616"/>
    </ligand>
</feature>
<organism>
    <name type="scientific">Roseiflexus sp. (strain RS-1)</name>
    <dbReference type="NCBI Taxonomy" id="357808"/>
    <lineage>
        <taxon>Bacteria</taxon>
        <taxon>Bacillati</taxon>
        <taxon>Chloroflexota</taxon>
        <taxon>Chloroflexia</taxon>
        <taxon>Chloroflexales</taxon>
        <taxon>Roseiflexineae</taxon>
        <taxon>Roseiflexaceae</taxon>
        <taxon>Roseiflexus</taxon>
    </lineage>
</organism>
<sequence length="1085" mass="120397">MTPAERRAFERQLQQEFPGLELHAWYRQYRSLKAAHPDAILLYRLGDFYETFDDDAKLVADLLEVTLTYKEFASQKGRDQKQRCPMAGIPYHAVEGYVARLVGAGYRVAIAEQITETPSSRTDTRPRSIFAAGIEQTSLTGSNRMVERKVVRVITPGTIIESGMIPAERNNYLAALIADHGRIGLAYADLSTGEFAAVEFSGERAAQQAQGELTRLNAAEILVPDRADLRLPGLEPSSARLEQDLEFLTREERELLLPGERVARRVERENNARWAHGRVTAWPERRWDLRNAHDTLLHQFGVRSLAGFGLEDRPLAIRAAGAIVQYARETQQGVVANLRSIRAYTPGDAMFLDPQTQRNLELLEGASGTTRGSLIGVLDQTRTPMGARLLRRWVSQPLCDLTRLHARHDAVERFVTDAILRASVRETLRRVGDMERVVNRIIQGVGVATPRDMARLRDALRALPELVAALGDWTPPPGEIDLTGVRTLPPSAATDPVSLTENGNERIEPNQTSAVSLRAQREARRRVSARYADEDLFGEEEQNAPPVGSSNHAVGTQPSADDEASPVTAFVDDQATETLALDPCADMLAFLETAIDDEPPALLGASNYLRAGENGEPPRRVIRPGFEPEIDQVVAASRDAQRWISELEPKERERTGIKSLRVDYNRVFGYYIEVPKTYADQVPKHYIRKQTLTTGERYFTDELKRYEEIVEQAQQRLIDLERRAFARICDVVTGAGARLLRTARMIATIDVFAALAEAAVRGRYVRPELYDDTRLRIVGGRHPVVEQTLDETFVPNDIEMDTETRQICLITGPNMSGKSTVLRQVALIALMAQIGSFVPADAAEIGLVDRIFTRIGAQDDIATGRSTFMVEMTETAALLAQSTRRSLIILDEVGRGTSTYDGMAIAQAVIEYIHNEPRLGCRTLFATHYHELTDLERTLPRLKNYHMAATEQDGRVVFLHELRPGGADRSYGIHVAELAGIPQSVIRRASELLAELERRAPRSAPPTVPARGDDRRSAGRASSSGAGAARGEQGRTLPDGQLSLFDLAPGPVIEMLRRIDINQLTPLEALNKLHELQKLARAGGG</sequence>
<dbReference type="EMBL" id="CP000686">
    <property type="protein sequence ID" value="ABQ92060.1"/>
    <property type="molecule type" value="Genomic_DNA"/>
</dbReference>
<dbReference type="RefSeq" id="WP_011958402.1">
    <property type="nucleotide sequence ID" value="NC_009523.1"/>
</dbReference>
<dbReference type="SMR" id="A5UZK7"/>
<dbReference type="STRING" id="357808.RoseRS_3706"/>
<dbReference type="KEGG" id="rrs:RoseRS_3706"/>
<dbReference type="eggNOG" id="COG0249">
    <property type="taxonomic scope" value="Bacteria"/>
</dbReference>
<dbReference type="HOGENOM" id="CLU_002472_3_1_0"/>
<dbReference type="OrthoDB" id="9802448at2"/>
<dbReference type="Proteomes" id="UP000006554">
    <property type="component" value="Chromosome"/>
</dbReference>
<dbReference type="GO" id="GO:0005829">
    <property type="term" value="C:cytosol"/>
    <property type="evidence" value="ECO:0007669"/>
    <property type="project" value="TreeGrafter"/>
</dbReference>
<dbReference type="GO" id="GO:0005524">
    <property type="term" value="F:ATP binding"/>
    <property type="evidence" value="ECO:0007669"/>
    <property type="project" value="UniProtKB-UniRule"/>
</dbReference>
<dbReference type="GO" id="GO:0140664">
    <property type="term" value="F:ATP-dependent DNA damage sensor activity"/>
    <property type="evidence" value="ECO:0007669"/>
    <property type="project" value="InterPro"/>
</dbReference>
<dbReference type="GO" id="GO:0003684">
    <property type="term" value="F:damaged DNA binding"/>
    <property type="evidence" value="ECO:0007669"/>
    <property type="project" value="UniProtKB-UniRule"/>
</dbReference>
<dbReference type="GO" id="GO:0030983">
    <property type="term" value="F:mismatched DNA binding"/>
    <property type="evidence" value="ECO:0007669"/>
    <property type="project" value="InterPro"/>
</dbReference>
<dbReference type="GO" id="GO:0006298">
    <property type="term" value="P:mismatch repair"/>
    <property type="evidence" value="ECO:0007669"/>
    <property type="project" value="UniProtKB-UniRule"/>
</dbReference>
<dbReference type="CDD" id="cd03284">
    <property type="entry name" value="ABC_MutS1"/>
    <property type="match status" value="1"/>
</dbReference>
<dbReference type="FunFam" id="1.10.1420.10:FF:000001">
    <property type="entry name" value="DNA mismatch repair protein MutS"/>
    <property type="match status" value="1"/>
</dbReference>
<dbReference type="FunFam" id="3.40.50.300:FF:000870">
    <property type="entry name" value="MutS protein homolog 4"/>
    <property type="match status" value="1"/>
</dbReference>
<dbReference type="Gene3D" id="1.10.1420.10">
    <property type="match status" value="2"/>
</dbReference>
<dbReference type="Gene3D" id="6.10.140.430">
    <property type="match status" value="1"/>
</dbReference>
<dbReference type="Gene3D" id="3.40.1170.10">
    <property type="entry name" value="DNA repair protein MutS, domain I"/>
    <property type="match status" value="1"/>
</dbReference>
<dbReference type="Gene3D" id="3.30.420.110">
    <property type="entry name" value="MutS, connector domain"/>
    <property type="match status" value="1"/>
</dbReference>
<dbReference type="Gene3D" id="3.40.50.300">
    <property type="entry name" value="P-loop containing nucleotide triphosphate hydrolases"/>
    <property type="match status" value="1"/>
</dbReference>
<dbReference type="HAMAP" id="MF_00096">
    <property type="entry name" value="MutS"/>
    <property type="match status" value="1"/>
</dbReference>
<dbReference type="InterPro" id="IPR005748">
    <property type="entry name" value="DNA_mismatch_repair_MutS"/>
</dbReference>
<dbReference type="InterPro" id="IPR007695">
    <property type="entry name" value="DNA_mismatch_repair_MutS-lik_N"/>
</dbReference>
<dbReference type="InterPro" id="IPR017261">
    <property type="entry name" value="DNA_mismatch_repair_MutS/MSH"/>
</dbReference>
<dbReference type="InterPro" id="IPR000432">
    <property type="entry name" value="DNA_mismatch_repair_MutS_C"/>
</dbReference>
<dbReference type="InterPro" id="IPR007861">
    <property type="entry name" value="DNA_mismatch_repair_MutS_clamp"/>
</dbReference>
<dbReference type="InterPro" id="IPR007696">
    <property type="entry name" value="DNA_mismatch_repair_MutS_core"/>
</dbReference>
<dbReference type="InterPro" id="IPR016151">
    <property type="entry name" value="DNA_mismatch_repair_MutS_N"/>
</dbReference>
<dbReference type="InterPro" id="IPR036187">
    <property type="entry name" value="DNA_mismatch_repair_MutS_sf"/>
</dbReference>
<dbReference type="InterPro" id="IPR007860">
    <property type="entry name" value="DNA_mmatch_repair_MutS_con_dom"/>
</dbReference>
<dbReference type="InterPro" id="IPR045076">
    <property type="entry name" value="MutS"/>
</dbReference>
<dbReference type="InterPro" id="IPR036678">
    <property type="entry name" value="MutS_con_dom_sf"/>
</dbReference>
<dbReference type="InterPro" id="IPR027417">
    <property type="entry name" value="P-loop_NTPase"/>
</dbReference>
<dbReference type="NCBIfam" id="NF003810">
    <property type="entry name" value="PRK05399.1"/>
    <property type="match status" value="1"/>
</dbReference>
<dbReference type="PANTHER" id="PTHR11361:SF34">
    <property type="entry name" value="DNA MISMATCH REPAIR PROTEIN MSH1, MITOCHONDRIAL"/>
    <property type="match status" value="1"/>
</dbReference>
<dbReference type="PANTHER" id="PTHR11361">
    <property type="entry name" value="DNA MISMATCH REPAIR PROTEIN MUTS FAMILY MEMBER"/>
    <property type="match status" value="1"/>
</dbReference>
<dbReference type="Pfam" id="PF01624">
    <property type="entry name" value="MutS_I"/>
    <property type="match status" value="1"/>
</dbReference>
<dbReference type="Pfam" id="PF05188">
    <property type="entry name" value="MutS_II"/>
    <property type="match status" value="1"/>
</dbReference>
<dbReference type="Pfam" id="PF05192">
    <property type="entry name" value="MutS_III"/>
    <property type="match status" value="1"/>
</dbReference>
<dbReference type="Pfam" id="PF05190">
    <property type="entry name" value="MutS_IV"/>
    <property type="match status" value="1"/>
</dbReference>
<dbReference type="Pfam" id="PF00488">
    <property type="entry name" value="MutS_V"/>
    <property type="match status" value="1"/>
</dbReference>
<dbReference type="PIRSF" id="PIRSF037677">
    <property type="entry name" value="DNA_mis_repair_Msh6"/>
    <property type="match status" value="1"/>
</dbReference>
<dbReference type="SMART" id="SM00534">
    <property type="entry name" value="MUTSac"/>
    <property type="match status" value="1"/>
</dbReference>
<dbReference type="SMART" id="SM00533">
    <property type="entry name" value="MUTSd"/>
    <property type="match status" value="1"/>
</dbReference>
<dbReference type="SUPFAM" id="SSF55271">
    <property type="entry name" value="DNA repair protein MutS, domain I"/>
    <property type="match status" value="1"/>
</dbReference>
<dbReference type="SUPFAM" id="SSF53150">
    <property type="entry name" value="DNA repair protein MutS, domain II"/>
    <property type="match status" value="1"/>
</dbReference>
<dbReference type="SUPFAM" id="SSF48334">
    <property type="entry name" value="DNA repair protein MutS, domain III"/>
    <property type="match status" value="1"/>
</dbReference>
<dbReference type="SUPFAM" id="SSF52540">
    <property type="entry name" value="P-loop containing nucleoside triphosphate hydrolases"/>
    <property type="match status" value="1"/>
</dbReference>
<dbReference type="PROSITE" id="PS00486">
    <property type="entry name" value="DNA_MISMATCH_REPAIR_2"/>
    <property type="match status" value="1"/>
</dbReference>
<protein>
    <recommendedName>
        <fullName evidence="1">DNA mismatch repair protein MutS</fullName>
    </recommendedName>
</protein>
<name>MUTS_ROSS1</name>